<evidence type="ECO:0000255" key="1"/>
<evidence type="ECO:0000305" key="2"/>
<protein>
    <recommendedName>
        <fullName>Major facilitator superfamily transporter MPN_076</fullName>
    </recommendedName>
</protein>
<proteinExistence type="inferred from homology"/>
<reference key="1">
    <citation type="journal article" date="1996" name="Nucleic Acids Res.">
        <title>Complete sequence analysis of the genome of the bacterium Mycoplasma pneumoniae.</title>
        <authorList>
            <person name="Himmelreich R."/>
            <person name="Hilbert H."/>
            <person name="Plagens H."/>
            <person name="Pirkl E."/>
            <person name="Li B.-C."/>
            <person name="Herrmann R."/>
        </authorList>
    </citation>
    <scope>NUCLEOTIDE SEQUENCE [LARGE SCALE GENOMIC DNA]</scope>
    <source>
        <strain>ATCC 29342 / M129 / Subtype 1</strain>
    </source>
</reference>
<keyword id="KW-1003">Cell membrane</keyword>
<keyword id="KW-0472">Membrane</keyword>
<keyword id="KW-1185">Reference proteome</keyword>
<keyword id="KW-0812">Transmembrane</keyword>
<keyword id="KW-1133">Transmembrane helix</keyword>
<keyword id="KW-0813">Transport</keyword>
<dbReference type="EMBL" id="U00089">
    <property type="protein sequence ID" value="AAB95727.1"/>
    <property type="molecule type" value="Genomic_DNA"/>
</dbReference>
<dbReference type="PIR" id="S73405">
    <property type="entry name" value="S73405"/>
</dbReference>
<dbReference type="RefSeq" id="NP_109764.1">
    <property type="nucleotide sequence ID" value="NC_000912.1"/>
</dbReference>
<dbReference type="RefSeq" id="WP_010874433.1">
    <property type="nucleotide sequence ID" value="NZ_OU342337.1"/>
</dbReference>
<dbReference type="IntAct" id="P75041">
    <property type="interactions" value="1"/>
</dbReference>
<dbReference type="STRING" id="272634.MPN_076"/>
<dbReference type="EnsemblBacteria" id="AAB95727">
    <property type="protein sequence ID" value="AAB95727"/>
    <property type="gene ID" value="MPN_076"/>
</dbReference>
<dbReference type="KEGG" id="mpn:MPN_076"/>
<dbReference type="PATRIC" id="fig|272634.6.peg.77"/>
<dbReference type="HOGENOM" id="CLU_033053_0_0_14"/>
<dbReference type="OrthoDB" id="399989at2"/>
<dbReference type="BioCyc" id="MPNE272634:G1GJ3-117-MONOMER"/>
<dbReference type="Proteomes" id="UP000000808">
    <property type="component" value="Chromosome"/>
</dbReference>
<dbReference type="GO" id="GO:0005886">
    <property type="term" value="C:plasma membrane"/>
    <property type="evidence" value="ECO:0007669"/>
    <property type="project" value="UniProtKB-SubCell"/>
</dbReference>
<dbReference type="InterPro" id="IPR011699">
    <property type="entry name" value="MFS_Mycoplasma"/>
</dbReference>
<dbReference type="InterPro" id="IPR036259">
    <property type="entry name" value="MFS_trans_sf"/>
</dbReference>
<dbReference type="Pfam" id="PF07672">
    <property type="entry name" value="MFS_Mycoplasma"/>
    <property type="match status" value="1"/>
</dbReference>
<dbReference type="SUPFAM" id="SSF103473">
    <property type="entry name" value="MFS general substrate transporter"/>
    <property type="match status" value="1"/>
</dbReference>
<feature type="chain" id="PRO_0000210405" description="Major facilitator superfamily transporter MPN_076">
    <location>
        <begin position="1"/>
        <end position="564"/>
    </location>
</feature>
<feature type="transmembrane region" description="Helical" evidence="1">
    <location>
        <begin position="1"/>
        <end position="21"/>
    </location>
</feature>
<feature type="transmembrane region" description="Helical" evidence="1">
    <location>
        <begin position="65"/>
        <end position="85"/>
    </location>
</feature>
<feature type="transmembrane region" description="Helical" evidence="1">
    <location>
        <begin position="89"/>
        <end position="109"/>
    </location>
</feature>
<feature type="transmembrane region" description="Helical" evidence="1">
    <location>
        <begin position="176"/>
        <end position="196"/>
    </location>
</feature>
<feature type="transmembrane region" description="Helical" evidence="1">
    <location>
        <begin position="220"/>
        <end position="240"/>
    </location>
</feature>
<feature type="transmembrane region" description="Helical" evidence="1">
    <location>
        <begin position="249"/>
        <end position="269"/>
    </location>
</feature>
<feature type="transmembrane region" description="Helical" evidence="1">
    <location>
        <begin position="306"/>
        <end position="326"/>
    </location>
</feature>
<feature type="transmembrane region" description="Helical" evidence="1">
    <location>
        <begin position="358"/>
        <end position="378"/>
    </location>
</feature>
<feature type="transmembrane region" description="Helical" evidence="1">
    <location>
        <begin position="404"/>
        <end position="424"/>
    </location>
</feature>
<feature type="transmembrane region" description="Helical" evidence="1">
    <location>
        <begin position="425"/>
        <end position="445"/>
    </location>
</feature>
<feature type="transmembrane region" description="Helical" evidence="1">
    <location>
        <begin position="457"/>
        <end position="477"/>
    </location>
</feature>
<feature type="transmembrane region" description="Helical" evidence="1">
    <location>
        <begin position="501"/>
        <end position="521"/>
    </location>
</feature>
<comment type="subcellular location">
    <subcellularLocation>
        <location evidence="2">Cell membrane</location>
        <topology evidence="2">Multi-pass membrane protein</topology>
    </subcellularLocation>
</comment>
<comment type="similarity">
    <text evidence="2">Belongs to the major facilitator superfamily.</text>
</comment>
<organism>
    <name type="scientific">Mycoplasma pneumoniae (strain ATCC 29342 / M129 / Subtype 1)</name>
    <name type="common">Mycoplasmoides pneumoniae</name>
    <dbReference type="NCBI Taxonomy" id="272634"/>
    <lineage>
        <taxon>Bacteria</taxon>
        <taxon>Bacillati</taxon>
        <taxon>Mycoplasmatota</taxon>
        <taxon>Mycoplasmoidales</taxon>
        <taxon>Mycoplasmoidaceae</taxon>
        <taxon>Mycoplasmoides</taxon>
    </lineage>
</organism>
<accession>P75041</accession>
<sequence length="564" mass="61632">MLWAIVLLGYLLFVVEWFVIDRIAGKPAGILDSNTKVLPNYDGWVNSFFANSAGSIAGSATNWSITLLRAVGSVLCGIVVLKFGYRYAVMIMMGLMCLCFPFLIIGDPLGGNNQLTLLRPLSKEVMGKLSSLSSQLHEGQLLGPVMAEGKTMLADGQTIDLVQGLDKNLIGTSSSIAGYALFIIFRSTIAIGGTTLVTYSQPLIASLSTQRRKSVLSNANLWGFNSGIVVAFVPFLFQSVQQAGTKYWVFILTALILIGFGILCVFAWFEKQMDPFMPQKQTKEQMQLGNQPSAGDILKRKATWKMIGMYGICLVVLVNPLTGGWWNILQAVSPASSFNVKDGVKTLKPLEGAGGYFAGLPTLAILWVLGYGMGYMVFSPFNKTVYDRKRWLSFMFFMNALMVIVIVLFAATLGVGTAVGFAFVAIATFIGGSFAWSMQSTILILPHEFKEYKRSEVSVLFGYIWGFGYVIYTAFDITNSMFLEAPKLANPGMKGVSILPGAIAGVALFAGLLLAAIAIVVTLPSSYLKNGDELVSEMTKKWKLNQWQFLVASKEKNRYADLLK</sequence>
<name>Y076_MYCPN</name>
<gene>
    <name type="ordered locus">MPN_076</name>
    <name type="ORF">MP079</name>
    <name type="ORF">R02_orf564o</name>
</gene>